<accession>A0A0E4AY46</accession>
<evidence type="ECO:0000255" key="1">
    <source>
        <dbReference type="PROSITE-ProRule" id="PRU00227"/>
    </source>
</evidence>
<evidence type="ECO:0000256" key="2">
    <source>
        <dbReference type="SAM" id="MobiDB-lite"/>
    </source>
</evidence>
<evidence type="ECO:0000269" key="3">
    <source>
    </source>
</evidence>
<evidence type="ECO:0000303" key="4">
    <source>
    </source>
</evidence>
<dbReference type="EMBL" id="LC025956">
    <property type="protein sequence ID" value="BAR40287.1"/>
    <property type="molecule type" value="Genomic_DNA"/>
</dbReference>
<dbReference type="SMR" id="A0A0E4AY46"/>
<dbReference type="GO" id="GO:0005634">
    <property type="term" value="C:nucleus"/>
    <property type="evidence" value="ECO:0007669"/>
    <property type="project" value="UniProtKB-SubCell"/>
</dbReference>
<dbReference type="GO" id="GO:0003677">
    <property type="term" value="F:DNA binding"/>
    <property type="evidence" value="ECO:0007669"/>
    <property type="project" value="UniProtKB-KW"/>
</dbReference>
<dbReference type="GO" id="GO:0000981">
    <property type="term" value="F:DNA-binding transcription factor activity, RNA polymerase II-specific"/>
    <property type="evidence" value="ECO:0007669"/>
    <property type="project" value="InterPro"/>
</dbReference>
<dbReference type="GO" id="GO:0008270">
    <property type="term" value="F:zinc ion binding"/>
    <property type="evidence" value="ECO:0007669"/>
    <property type="project" value="InterPro"/>
</dbReference>
<dbReference type="CDD" id="cd00067">
    <property type="entry name" value="GAL4"/>
    <property type="match status" value="1"/>
</dbReference>
<dbReference type="Gene3D" id="4.10.240.10">
    <property type="entry name" value="Zn(2)-C6 fungal-type DNA-binding domain"/>
    <property type="match status" value="1"/>
</dbReference>
<dbReference type="InterPro" id="IPR050797">
    <property type="entry name" value="Carb_Metab_Trans_Reg"/>
</dbReference>
<dbReference type="InterPro" id="IPR036864">
    <property type="entry name" value="Zn2-C6_fun-type_DNA-bd_sf"/>
</dbReference>
<dbReference type="InterPro" id="IPR001138">
    <property type="entry name" value="Zn2Cys6_DnaBD"/>
</dbReference>
<dbReference type="PANTHER" id="PTHR31668">
    <property type="entry name" value="GLUCOSE TRANSPORT TRANSCRIPTION REGULATOR RGT1-RELATED-RELATED"/>
    <property type="match status" value="1"/>
</dbReference>
<dbReference type="SMART" id="SM00066">
    <property type="entry name" value="GAL4"/>
    <property type="match status" value="1"/>
</dbReference>
<dbReference type="SUPFAM" id="SSF57701">
    <property type="entry name" value="Zn2/Cys6 DNA-binding domain"/>
    <property type="match status" value="1"/>
</dbReference>
<dbReference type="PROSITE" id="PS50048">
    <property type="entry name" value="ZN2_CY6_FUNGAL_2"/>
    <property type="match status" value="1"/>
</dbReference>
<organism>
    <name type="scientific">Fusarium sp. (strain FN080326)</name>
    <dbReference type="NCBI Taxonomy" id="1608308"/>
    <lineage>
        <taxon>Eukaryota</taxon>
        <taxon>Fungi</taxon>
        <taxon>Dikarya</taxon>
        <taxon>Ascomycota</taxon>
        <taxon>Pezizomycotina</taxon>
        <taxon>Sordariomycetes</taxon>
        <taxon>Hypocreomycetidae</taxon>
        <taxon>Hypocreales</taxon>
        <taxon>Nectriaceae</taxon>
        <taxon>Fusarium</taxon>
    </lineage>
</organism>
<protein>
    <recommendedName>
        <fullName evidence="4">Fusarisetin A cluster transcription factor fsa5</fullName>
    </recommendedName>
    <alternativeName>
        <fullName evidence="4">Fusarisetin A biosynthesis protein 5</fullName>
    </alternativeName>
</protein>
<keyword id="KW-0238">DNA-binding</keyword>
<keyword id="KW-0479">Metal-binding</keyword>
<keyword id="KW-0539">Nucleus</keyword>
<keyword id="KW-0804">Transcription</keyword>
<keyword id="KW-0805">Transcription regulation</keyword>
<keyword id="KW-0862">Zinc</keyword>
<feature type="chain" id="PRO_0000441302" description="Fusarisetin A cluster transcription factor fsa5">
    <location>
        <begin position="1"/>
        <end position="465"/>
    </location>
</feature>
<feature type="DNA-binding region" description="Zn(2)-C6 fungal-type" evidence="1">
    <location>
        <begin position="13"/>
        <end position="47"/>
    </location>
</feature>
<feature type="region of interest" description="Disordered" evidence="2">
    <location>
        <begin position="58"/>
        <end position="88"/>
    </location>
</feature>
<feature type="compositionally biased region" description="Polar residues" evidence="2">
    <location>
        <begin position="68"/>
        <end position="84"/>
    </location>
</feature>
<comment type="function">
    <text evidence="3">Transcription activator that specifically regulates the expression of the gene cluster that mediates the biosynthesis of fusarisetin A (PubMed:25770422).</text>
</comment>
<comment type="subcellular location">
    <subcellularLocation>
        <location evidence="1">Nucleus</location>
    </subcellularLocation>
</comment>
<comment type="disruption phenotype">
    <text evidence="3">Impairs the transcription of the fusarisetin A biosynthesis cluster and abolishes fusarisetin A production (PubMed:25770422).</text>
</comment>
<gene>
    <name evidence="4" type="primary">fsa5</name>
</gene>
<reference key="1">
    <citation type="journal article" date="2015" name="Biochem. Biophys. Res. Commun.">
        <title>A new enzyme involved in the control of the stereochemistry in the decalin formation during equisetin biosynthesis.</title>
        <authorList>
            <person name="Kato N."/>
            <person name="Nogawa T."/>
            <person name="Hirota H."/>
            <person name="Jang J.H."/>
            <person name="Takahashi S."/>
            <person name="Ahn J.S."/>
            <person name="Osada H."/>
        </authorList>
    </citation>
    <scope>NUCLEOTIDE SEQUENCE [GENOMIC DNA]</scope>
    <scope>FUNCTION</scope>
    <scope>DISRUPTION PHENOTYPE</scope>
</reference>
<name>FSA5_FUSSF</name>
<proteinExistence type="inferred from homology"/>
<sequence>MSTQNNQSIRSSCDRCRSHKLKCTVAPENTRSGSSRCTRCIRAQVTCVFGHRSQSKRSTNVKKADLRSGTNGQETTSMQASTIVPGSPDLWVGRQEVEEGLHIGSDSGPSMADGDLWAELGTNHDLSLFDITPSSLPTHNSQQQFSATDFCSAPMAPHSALSTINSQEWQLDLSEYPNQTTTGPHAIVQLSALVAKIHETSRTLEESFWTSLAESNQLKSYPIGRVLSLSQDFSTILECIWASKNMDCKQSLSCAASDNHGQDATSSFELEDVLDYGELLSTVGTSPGRSDFSTSTHSSVATTVDMPTMLLVLSCYTSLTKLYSLVFEHFESHLSHLPHSYTSQTAHASPKWGLGLQLGELPSADETCTKVYTAVQILLDAFQSVEDVVGLPRSLSAVRQQSCGKEEEGESGDVFNRASLWTDFLAKSVFKATVKSSSEEDCEEIRQLSIKVKSLKSLIRERMKL</sequence>